<comment type="function">
    <text evidence="4 6 7 9 10 11 12 13 16 17">Oligomerizes into helical capsid to encapsidate the viral genome, protecting it from nucleases and the cellular innate immune response (PubMed:16719918, PubMed:25865894, PubMed:26119732, PubMed:30333622). VP35 binds to and stabilizes monomeric NP, keeping it soluble (PubMed:25865894, PubMed:26119732). Upon virus replication, NP is recruited to bind cooperatively viral genomic RNA and VP35 is released (PubMed:29144446). The encapsidated genomic RNA is termed the nucleocapsid and serves as template for transcription and replication. The nucleocapsid is helical with a pitch of 10.81 NP per turn and a diameter of about 22nm (PubMed:22247782). Each NP binds to six nucleotides of viral genomic RNA, three being exposed to the solvant and three hidden into the nucleocapsid (PubMed:30333622). Also recruits host PPP2R5C phosphatase to dephosphorylate VP30 and thereby promote viral transcription (PubMed:27755595, PubMed:29290611). Upon virion assembly and budding, NP binds to VP24 and possibly host STAU1 (PubMed:28794491, PubMed:30301857).</text>
</comment>
<comment type="subunit">
    <text evidence="2 5 7 8 9 10 11 12 13 14 16 18 19 20">Homooligomer. Homomultimerizes to form the nucleocapsid. Binds to viral genomic RNA. Interacts with VP35 and VP30 to form the nucleocapsid (PubMed:12191476, PubMed:25865894, PubMed:25910597, PubMed:26119732, PubMed:27755595). Interacts with host PPP2R5C; this interaction leads to VP30 dephosphorylation and viral transcription (PubMed:29290611). Interacts with VP24; this interaction facilitates nucleocapsid assembly and genome packaging (PubMed:12191476, PubMed:28794491, PubMed:29144446, PubMed:29339477). Interacts with matrix protein VP40; this interaction allows recruitment of the nucleocapsid into progeny virions (PubMed:17229682). Interacts with host STAU1 (PubMed:30301857). Interacts with host NXF1 (via RNA-binding domain); this interaction recruits NXF1 to the inclusion bodies were viral replication takes place, probably to export viral mRNA-NXF1 complexes from these sites (PubMed:31940815). Interacts with host CCDC92; this interaction sequesters NP in the host cytoplasm (PubMed:32528005). Interacts with host TRIM14 (PubMed:37562033).</text>
</comment>
<comment type="interaction">
    <interactant intactId="EBI-9820219">
        <id>P18272</id>
    </interactant>
    <interactant intactId="EBI-6148294">
        <id>Q05127</id>
        <label>VP35</label>
    </interactant>
    <organismsDiffer>false</organismsDiffer>
    <experiments>2</experiments>
</comment>
<comment type="interaction">
    <interactant intactId="EBI-9820219">
        <id>P18272</id>
    </interactant>
    <interactant intactId="EBI-297683">
        <id>Q96CW1</id>
        <label>AP2M1</label>
    </interactant>
    <organismsDiffer>true</organismsDiffer>
    <experiments>2</experiments>
</comment>
<comment type="interaction">
    <interactant intactId="EBI-9820219">
        <id>P18272</id>
    </interactant>
    <interactant intactId="EBI-447404">
        <id>Q9NZ52</id>
        <label>GGA3</label>
    </interactant>
    <organismsDiffer>true</organismsDiffer>
    <experiments>2</experiments>
</comment>
<comment type="subcellular location">
    <subcellularLocation>
        <location evidence="4">Virion</location>
    </subcellularLocation>
    <subcellularLocation>
        <location evidence="11 13 19">Host cytoplasm</location>
    </subcellularLocation>
</comment>
<comment type="domain">
    <text evidence="7 17">Comprizes a N-terminal arm involved in oligomerization, a NP core region involved in RNA binding, a disordered region follwoed by a C-terminal tail involved in protein-protein interactions (PubMed:25865894, PubMed:30333622). During oligomerization, NP N-terminal arm binds to a neighbor NP thereby displacing VP35 bound to monomeric NP (PubMed:30333622).</text>
</comment>
<comment type="PTM">
    <text evidence="3">Phosphorylated by host.</text>
</comment>
<comment type="PTM">
    <text evidence="3">O-glycosylated by host.</text>
</comment>
<comment type="PTM">
    <text evidence="15">Acetylated by host EP300 in vitro.</text>
</comment>
<comment type="similarity">
    <text evidence="23">Belongs to the filoviruses nucleoprotein family.</text>
</comment>
<comment type="caution">
    <text evidence="15">Acetylation has been show in vitro using purified recombinant proteins. Additional evidence are however required to confirm this result in vivo.</text>
</comment>
<reference key="1">
    <citation type="journal article" date="1989" name="Virology">
        <title>The nucleoprotein gene of Ebola virus: cloning, sequencing, and in vitro expression.</title>
        <authorList>
            <person name="Sanchez A."/>
            <person name="Kiley M.P."/>
            <person name="Holloway B.P."/>
            <person name="McCormick J.B."/>
            <person name="Auperin D.D."/>
        </authorList>
    </citation>
    <scope>NUCLEOTIDE SEQUENCE [GENOMIC RNA]</scope>
</reference>
<reference key="2">
    <citation type="journal article" date="1993" name="Virus Res.">
        <title>Sequence analysis of the Ebola virus genome: organization, genetic elements, and comparison with the genome of Marburg virus.</title>
        <authorList>
            <person name="Sanchez A."/>
            <person name="Kiley M.P."/>
            <person name="Holloway B.P."/>
            <person name="Auperin D.D."/>
        </authorList>
    </citation>
    <scope>NUCLEOTIDE SEQUENCE [GENOMIC RNA]</scope>
</reference>
<reference key="3">
    <citation type="journal article" date="2000" name="Virology">
        <title>Molecular characterization of guinea pig-adapted variants of Ebola virus.</title>
        <authorList>
            <person name="Volchkov V.E."/>
            <person name="Chepurnov A.A."/>
            <person name="Volchkova V.A."/>
            <person name="Ternovoj V.A."/>
            <person name="Klenk H.D."/>
        </authorList>
    </citation>
    <scope>NUCLEOTIDE SEQUENCE [GENOMIC RNA]</scope>
    <source>
        <strain>Isolate guinea pig-adapted</strain>
    </source>
</reference>
<reference key="4">
    <citation type="submission" date="2002-08" db="EMBL/GenBank/DDBJ databases">
        <authorList>
            <person name="Wilson J.A."/>
            <person name="Kondig J.P."/>
            <person name="Kuehne A.I."/>
            <person name="Hart M.K."/>
        </authorList>
    </citation>
    <scope>NUCLEOTIDE SEQUENCE [GENOMIC RNA]</scope>
    <source>
        <strain>Isolate mouse-adapted</strain>
    </source>
</reference>
<reference key="5">
    <citation type="journal article" date="2002" name="Mol. Cell">
        <title>The assembly of Ebola virus nucleocapsid requires virion-associated proteins 35 and 24 and posttranslational modification of nucleoprotein.</title>
        <authorList>
            <person name="Huang Y."/>
            <person name="Xu L."/>
            <person name="Sun Y."/>
            <person name="Nabel G.J."/>
        </authorList>
    </citation>
    <scope>INTERACTION WITH VP35; VP30 AND VP24</scope>
</reference>
<reference key="6">
    <citation type="journal article" date="2006" name="J. Virol.">
        <title>Functional mapping of the nucleoprotein of Ebola virus.</title>
        <authorList>
            <person name="Watanabe S."/>
            <person name="Noda T."/>
            <person name="Kawaoka Y."/>
        </authorList>
    </citation>
    <scope>GLYCOSYLATION</scope>
</reference>
<reference key="7">
    <citation type="journal article" date="2006" name="Virol. J.">
        <title>Effect of Ebola virus proteins GP, NP and VP35 on VP40 VLP morphology.</title>
        <authorList>
            <person name="Johnson R.F."/>
            <person name="Bell P."/>
            <person name="Harty R.N."/>
        </authorList>
    </citation>
    <scope>FUNCTION</scope>
    <scope>SUBCELLULAR LOCATION</scope>
</reference>
<reference key="8">
    <citation type="journal article" date="2007" name="J. Virol.">
        <title>Mapping of the VP40-binding regions of the nucleoprotein of Ebola virus.</title>
        <authorList>
            <person name="Noda T."/>
            <person name="Watanabe S."/>
            <person name="Sagara H."/>
            <person name="Kawaoka Y."/>
        </authorList>
    </citation>
    <scope>INTERACTION WITH VP40</scope>
</reference>
<reference key="9">
    <citation type="journal article" date="2012" name="PLoS ONE">
        <title>The organisation of Ebola virus reveals a capacity for extensive, modular polyploidy.</title>
        <authorList>
            <person name="Beniac D.R."/>
            <person name="Melito P.L."/>
            <person name="Devarennes S.L."/>
            <person name="Hiebert S.L."/>
            <person name="Rabb M.J."/>
            <person name="Lamboo L.L."/>
            <person name="Jones S.M."/>
            <person name="Booth T.F."/>
        </authorList>
    </citation>
    <scope>FUNCTION</scope>
</reference>
<reference key="10">
    <citation type="journal article" date="2015" name="Cell Rep.">
        <title>Assembly of the Ebola Virus Nucleoprotein from a Chaperoned VP35 Complex.</title>
        <authorList>
            <person name="Kirchdoerfer R.N."/>
            <person name="Abelson D.M."/>
            <person name="Li S."/>
            <person name="Wood M.R."/>
            <person name="Saphire E.O."/>
        </authorList>
    </citation>
    <scope>FUNCTION</scope>
    <scope>INTERACTION WITH VP35</scope>
</reference>
<reference key="11">
    <citation type="journal article" date="2017" name="Sci. Rep.">
        <title>Ebola virus VP24 interacts with NP to facilitate nucleocapsid assembly and genome packaging.</title>
        <authorList>
            <person name="Banadyga L."/>
            <person name="Hoenen T."/>
            <person name="Ambroggio X."/>
            <person name="Dunham E."/>
            <person name="Groseth A."/>
            <person name="Ebihara H."/>
        </authorList>
    </citation>
    <scope>FUNCTION</scope>
    <scope>INTERACTION WITH VP24</scope>
    <scope>SUBCELLULAR LOCATION</scope>
</reference>
<reference key="12">
    <citation type="journal article" date="2018" name="Mol. Cell">
        <title>The Ebola virus nucleoprotein recruits the host PP2A-B56 Phosphatase to activate transcriptional support activity of VP30.</title>
        <authorList>
            <person name="Kruse T."/>
            <person name="Biedenkopf N."/>
            <person name="Hertz E.P.T."/>
            <person name="Dietzel E."/>
            <person name="Stalmann G."/>
            <person name="Lopez-Mendez B."/>
            <person name="Davey N.E."/>
            <person name="Nilsson J."/>
            <person name="Becker S."/>
        </authorList>
    </citation>
    <scope>FUNCTION</scope>
    <scope>SUBCELLULAR LOCATION</scope>
    <scope>INTERACTION WITH VP30 AND HOST PPP2R5C</scope>
</reference>
<reference key="13">
    <citation type="journal article" date="2018" name="MBio">
        <title>Staufen1 Interacts with Multiple Components of the Ebola Virus Ribonucleoprotein and Enhances Viral RNA Synthesis.</title>
        <authorList>
            <person name="Fang J."/>
            <person name="Pietzsch C."/>
            <person name="Ramanathan P."/>
            <person name="Santos R.I."/>
            <person name="Ilinykh P.A."/>
            <person name="Garcia-Blanco M.A."/>
            <person name="Bukreyev A."/>
            <person name="Bradrick S.S."/>
        </authorList>
    </citation>
    <scope>FUNCTION</scope>
    <scope>INTERACTION WITH HOST STAU1</scope>
</reference>
<reference key="14">
    <citation type="journal article" date="2018" name="Proc. Natl. Acad. Sci. U.S.A.">
        <title>Ebola virus proteins NP, VP35, and VP24 are essential and sufficient to mediate nucleocapsid transport.</title>
        <authorList>
            <person name="Takamatsu Y."/>
            <person name="Kolesnikova L."/>
            <person name="Becker S."/>
        </authorList>
    </citation>
    <scope>FUNCTION</scope>
</reference>
<reference key="15">
    <citation type="journal article" date="2018" name="Biochem. Biophys. Res. Commun.">
        <title>Acetylation of lysine residues in the recombinant nucleoprotein and VP40 matrix protein of Zaire Ebolavirus by eukaryotic histone acetyltransferases.</title>
        <authorList>
            <person name="Hatakeyama D."/>
            <person name="Ohmi N."/>
            <person name="Saitoh A."/>
            <person name="Makiyama K."/>
            <person name="Morioka M."/>
            <person name="Okazaki H."/>
            <person name="Kuzuhara T."/>
        </authorList>
    </citation>
    <scope>ACETYLATION</scope>
</reference>
<reference key="16">
    <citation type="journal article" date="2020" name="Cells">
        <title>The Ebola Virus Nucleoprotein Recruits the Nuclear RNA Export Factor NXF1 into Inclusion Bodies to Facilitate Viral Protein Expression.</title>
        <authorList>
            <person name="Wendt L."/>
            <person name="Brandt J."/>
            <person name="Bodmer B.S."/>
            <person name="Reiche S."/>
            <person name="Schmidt M.L."/>
            <person name="Traeger S."/>
            <person name="Hoenen T."/>
        </authorList>
    </citation>
    <scope>INTERACTION WITH HOST NXF1</scope>
</reference>
<reference key="17">
    <citation type="journal article" date="2020" name="Nat. Commun.">
        <title>Identification of interferon-stimulated genes that attenuate Ebola virus infection.</title>
        <authorList>
            <person name="Kuroda M."/>
            <person name="Halfmann P.J."/>
            <person name="Hill-Batorski L."/>
            <person name="Ozawa M."/>
            <person name="Lopes T.J.S."/>
            <person name="Neumann G."/>
            <person name="Schoggins J.W."/>
            <person name="Rice C.M."/>
            <person name="Kawaoka Y."/>
        </authorList>
    </citation>
    <scope>INTERACTION WITH HOST CCDC92</scope>
    <scope>SUBCELLULAR LOCATION</scope>
</reference>
<reference key="18">
    <citation type="journal article" date="2023" name="J. Infect. Dis.">
        <title>An antiviral role for TRIM14 in Ebola virus infection.</title>
        <authorList>
            <person name="Kuroda M."/>
            <person name="Halfmann P.J."/>
            <person name="Thackray L.B."/>
            <person name="Diamond M.S."/>
            <person name="Feldmann H."/>
            <person name="Marzi A."/>
            <person name="Kawaoka Y."/>
        </authorList>
    </citation>
    <scope>INTERACTION WITH HOST TRIM14</scope>
</reference>
<reference key="19">
    <citation type="journal article" date="2014" name="Acta Crystallogr. D">
        <title>The structure of the C-terminal domain of the Zaire ebolavirus nucleoprotein.</title>
        <authorList>
            <person name="Dziubanska P.J."/>
            <person name="Derewenda U."/>
            <person name="Ellena J.F."/>
            <person name="Engel D.A."/>
            <person name="Derewenda Z.S."/>
        </authorList>
    </citation>
    <scope>X-RAY CRYSTALLOGRAPHY (1.75 ANGSTROMS) OF 641-739</scope>
</reference>
<reference key="20">
    <citation type="journal article" date="2015" name="Cell Rep.">
        <title>An Intrinsically Disordered Peptide from Ebola Virus VP35 Controls Viral RNA Synthesis by Modulating Nucleoprotein-RNA Interactions.</title>
        <authorList>
            <person name="Leung D.W."/>
            <person name="Borek D."/>
            <person name="Luthra P."/>
            <person name="Binning J.M."/>
            <person name="Anantpadma M."/>
            <person name="Liu G."/>
            <person name="Harvey I.B."/>
            <person name="Su Z."/>
            <person name="Endlich-Frazier A."/>
            <person name="Pan J."/>
            <person name="Shabman R.S."/>
            <person name="Chiu W."/>
            <person name="Davey R.A."/>
            <person name="Otwinowski Z."/>
            <person name="Basler C.F."/>
            <person name="Amarasinghe G.K."/>
        </authorList>
    </citation>
    <scope>X-RAY CRYSTALLOGRAPHY (3.71 ANGSTROMS) OF 38-385</scope>
    <scope>FUNCTION</scope>
    <scope>REGION</scope>
    <scope>INTERACTION WITH VP35</scope>
    <scope>MUTAGENESIS OF TYR-21 AND HIS-22</scope>
</reference>
<reference key="21">
    <citation type="journal article" date="2015" name="Protein Cell">
        <title>Insight into the Ebola virus nucleocapsid assembly mechanism: crystal structure of Ebola virus nucleoprotein core domain at 1.8 Aa resolution.</title>
        <authorList>
            <person name="Dong S."/>
            <person name="Yang P."/>
            <person name="Li G."/>
            <person name="Liu B."/>
            <person name="Wang W."/>
            <person name="Liu X."/>
            <person name="Xia B."/>
            <person name="Yang C."/>
            <person name="Lou Z."/>
            <person name="Guo Y."/>
            <person name="Rao Z."/>
        </authorList>
    </citation>
    <scope>X-RAY CRYSTALLOGRAPHY (1.79 ANGSTROMS) OF 36-351</scope>
    <scope>INTERACTION WITH VP35</scope>
</reference>
<reference key="22">
    <citation type="journal article" date="2016" name="PLoS Pathog.">
        <title>The Ebola virus VP30-NP interaction is a regulator of viral RNA synthesis.</title>
        <authorList>
            <person name="Kirchdoerfer R.N."/>
            <person name="Moyer C.L."/>
            <person name="Abelson D.M."/>
            <person name="Saphire E.O."/>
        </authorList>
    </citation>
    <scope>X-RAY CRYSTALLOGRAPHY (2.20 ANGSTROMS) OF 600-627</scope>
    <scope>INTERACTION WITH VP30</scope>
    <scope>FUNCTION</scope>
</reference>
<reference key="23">
    <citation type="journal article" date="2017" name="Nature">
        <title>Structure and assembly of the Ebola virus nucleocapsid.</title>
        <authorList>
            <person name="Wan W."/>
            <person name="Kolesnikova L."/>
            <person name="Clarke M."/>
            <person name="Koehler A."/>
            <person name="Noda T."/>
            <person name="Becker S."/>
            <person name="Briggs J.A.G."/>
        </authorList>
    </citation>
    <scope>STRUCTURE BY ELECTRON MICROSCOPY (6.60 ANGSTROMS)</scope>
    <scope>INTERACTION WITH VP24</scope>
    <scope>FUNCTION</scope>
</reference>
<reference key="24">
    <citation type="journal article" date="2018" name="Cell">
        <title>Electron Cryo-microscopy Structure of Ebola Virus Nucleoprotein Reveals a Mechanism for Nucleocapsid-like Assembly.</title>
        <authorList>
            <person name="Su Z."/>
            <person name="Wu C."/>
            <person name="Shi L."/>
            <person name="Luthra P."/>
            <person name="Pintilie G.D."/>
            <person name="Johnson B."/>
            <person name="Porter J.R."/>
            <person name="Ge P."/>
            <person name="Chen M."/>
            <person name="Liu G."/>
            <person name="Frederick T.E."/>
            <person name="Binning J.M."/>
            <person name="Bowman G.R."/>
            <person name="Zhou Z.H."/>
            <person name="Basler C.F."/>
            <person name="Gross M.L."/>
            <person name="Leung D.W."/>
            <person name="Chiu W."/>
            <person name="Amarasinghe G.K."/>
        </authorList>
    </citation>
    <scope>STRUCTURE BY ELECTRON MICROSCOPY (5.80 ANGSTROMS) OF 25-457</scope>
    <scope>NOMENCLATURE</scope>
</reference>
<reference key="25">
    <citation type="journal article" date="2018" name="Nature">
        <title>Cryo-EM structure of the Ebola virus nucleoprotein-RNA complex at 3.6 Aa resolution.</title>
        <authorList>
            <person name="Sugita Y."/>
            <person name="Matsunami H."/>
            <person name="Kawaoka Y."/>
            <person name="Noda T."/>
            <person name="Wolf M."/>
        </authorList>
    </citation>
    <scope>STRUCTURE BY ELECTRON MICROSCOPY (3.60 ANGSTROMS) OF 19-406</scope>
    <scope>FUNCTION</scope>
</reference>
<keyword id="KW-0002">3D-structure</keyword>
<keyword id="KW-0007">Acetylation</keyword>
<keyword id="KW-0167">Capsid protein</keyword>
<keyword id="KW-1139">Helical capsid protein</keyword>
<keyword id="KW-1035">Host cytoplasm</keyword>
<keyword id="KW-0597">Phosphoprotein</keyword>
<keyword id="KW-1185">Reference proteome</keyword>
<keyword id="KW-0687">Ribonucleoprotein</keyword>
<keyword id="KW-0694">RNA-binding</keyword>
<keyword id="KW-0946">Virion</keyword>
<organismHost>
    <name type="scientific">Epomops franqueti</name>
    <name type="common">Franquet's epauletted fruit bat</name>
    <name type="synonym">Epomophorus franqueti</name>
    <dbReference type="NCBI Taxonomy" id="77231"/>
</organismHost>
<organismHost>
    <name type="scientific">Homo sapiens</name>
    <name type="common">Human</name>
    <dbReference type="NCBI Taxonomy" id="9606"/>
</organismHost>
<organismHost>
    <name type="scientific">Myonycteris torquata</name>
    <name type="common">Little collared fruit bat</name>
    <dbReference type="NCBI Taxonomy" id="77243"/>
</organismHost>
<feature type="chain" id="PRO_0000222171" description="Nucleoprotein">
    <location>
        <begin position="1"/>
        <end position="739"/>
    </location>
</feature>
<feature type="region of interest" description="Oligomerization, N-terminal arm" evidence="7 22">
    <location>
        <begin position="1"/>
        <end position="25"/>
    </location>
</feature>
<feature type="region of interest" description="NP core" evidence="22">
    <location>
        <begin position="26"/>
        <end position="405"/>
    </location>
</feature>
<feature type="region of interest" description="Disordered" evidence="1">
    <location>
        <begin position="415"/>
        <end position="647"/>
    </location>
</feature>
<feature type="short sequence motif" description="Host PPP2R5C-binding motif" evidence="13">
    <location>
        <begin position="562"/>
        <end position="567"/>
    </location>
</feature>
<feature type="short sequence motif" description="VP30-binding motif" evidence="13">
    <location>
        <begin position="606"/>
        <end position="611"/>
    </location>
</feature>
<feature type="compositionally biased region" description="Low complexity" evidence="1">
    <location>
        <begin position="449"/>
        <end position="458"/>
    </location>
</feature>
<feature type="compositionally biased region" description="Low complexity" evidence="1">
    <location>
        <begin position="504"/>
        <end position="514"/>
    </location>
</feature>
<feature type="compositionally biased region" description="Acidic residues" evidence="1">
    <location>
        <begin position="567"/>
        <end position="579"/>
    </location>
</feature>
<feature type="compositionally biased region" description="Basic and acidic residues" evidence="1">
    <location>
        <begin position="611"/>
        <end position="638"/>
    </location>
</feature>
<feature type="sequence variant" description="In strain: Isolate mouse-adapted.">
    <original>S</original>
    <variation>G</variation>
    <location>
        <position position="72"/>
    </location>
</feature>
<feature type="sequence variant" description="In strain: Isolate guinea pig-adapted.">
    <original>S</original>
    <variation>F</variation>
    <location>
        <position position="524"/>
    </location>
</feature>
<feature type="sequence variant" description="In strain: Isolate guinea pig-adapted.">
    <original>F</original>
    <variation>L</variation>
    <location>
        <position position="648"/>
    </location>
</feature>
<feature type="mutagenesis site" description="More than 90% loss of oligomerization; when associated with A-21." evidence="7">
    <original>Y</original>
    <variation>A</variation>
    <location>
        <position position="21"/>
    </location>
</feature>
<feature type="mutagenesis site" description="More than 90% loss of oligomerization; when associated with A-22." evidence="7">
    <original>H</original>
    <variation>A</variation>
    <location>
        <position position="22"/>
    </location>
</feature>
<feature type="sequence conflict" description="In Ref. 1; AAA42977." evidence="23" ref="1">
    <original>E</original>
    <variation>R</variation>
    <location>
        <position position="170"/>
    </location>
</feature>
<feature type="sequence conflict" description="In Ref. 1; AAA42977." evidence="23" ref="1">
    <original>F</original>
    <variation>L</variation>
    <location>
        <position position="280"/>
    </location>
</feature>
<feature type="helix" evidence="28">
    <location>
        <begin position="23"/>
        <end position="26"/>
    </location>
</feature>
<feature type="turn" evidence="28">
    <location>
        <begin position="27"/>
        <end position="29"/>
    </location>
</feature>
<feature type="strand" evidence="25">
    <location>
        <begin position="39"/>
        <end position="45"/>
    </location>
</feature>
<feature type="helix" evidence="25">
    <location>
        <begin position="49"/>
        <end position="61"/>
    </location>
</feature>
<feature type="helix" evidence="25">
    <location>
        <begin position="67"/>
        <end position="69"/>
    </location>
</feature>
<feature type="helix" evidence="25">
    <location>
        <begin position="70"/>
        <end position="82"/>
    </location>
</feature>
<feature type="helix" evidence="25">
    <location>
        <begin position="87"/>
        <end position="91"/>
    </location>
</feature>
<feature type="helix" evidence="25">
    <location>
        <begin position="94"/>
        <end position="100"/>
    </location>
</feature>
<feature type="turn" evidence="25">
    <location>
        <begin position="101"/>
        <end position="103"/>
    </location>
</feature>
<feature type="strand" evidence="25">
    <location>
        <begin position="104"/>
        <end position="110"/>
    </location>
</feature>
<feature type="helix" evidence="25">
    <location>
        <begin position="117"/>
        <end position="120"/>
    </location>
</feature>
<feature type="helix" evidence="25">
    <location>
        <begin position="128"/>
        <end position="135"/>
    </location>
</feature>
<feature type="helix" evidence="25">
    <location>
        <begin position="147"/>
        <end position="155"/>
    </location>
</feature>
<feature type="turn" evidence="25">
    <location>
        <begin position="156"/>
        <end position="160"/>
    </location>
</feature>
<feature type="helix" evidence="25">
    <location>
        <begin position="161"/>
        <end position="163"/>
    </location>
</feature>
<feature type="helix" evidence="25">
    <location>
        <begin position="165"/>
        <end position="181"/>
    </location>
</feature>
<feature type="helix" evidence="25">
    <location>
        <begin position="189"/>
        <end position="192"/>
    </location>
</feature>
<feature type="helix" evidence="25">
    <location>
        <begin position="194"/>
        <end position="206"/>
    </location>
</feature>
<feature type="helix" evidence="25">
    <location>
        <begin position="208"/>
        <end position="219"/>
    </location>
</feature>
<feature type="helix" evidence="25">
    <location>
        <begin position="227"/>
        <end position="239"/>
    </location>
</feature>
<feature type="turn" evidence="25">
    <location>
        <begin position="240"/>
        <end position="243"/>
    </location>
</feature>
<feature type="helix" evidence="25">
    <location>
        <begin position="245"/>
        <end position="253"/>
    </location>
</feature>
<feature type="strand" evidence="26">
    <location>
        <begin position="255"/>
        <end position="257"/>
    </location>
</feature>
<feature type="strand" evidence="26">
    <location>
        <begin position="262"/>
        <end position="264"/>
    </location>
</feature>
<feature type="helix" evidence="25">
    <location>
        <begin position="266"/>
        <end position="268"/>
    </location>
</feature>
<feature type="helix" evidence="25">
    <location>
        <begin position="271"/>
        <end position="273"/>
    </location>
</feature>
<feature type="helix" evidence="25">
    <location>
        <begin position="274"/>
        <end position="288"/>
    </location>
</feature>
<feature type="helix" evidence="25">
    <location>
        <begin position="289"/>
        <end position="296"/>
    </location>
</feature>
<feature type="turn" evidence="25">
    <location>
        <begin position="297"/>
        <end position="301"/>
    </location>
</feature>
<feature type="helix" evidence="25">
    <location>
        <begin position="305"/>
        <end position="308"/>
    </location>
</feature>
<feature type="helix" evidence="25">
    <location>
        <begin position="310"/>
        <end position="312"/>
    </location>
</feature>
<feature type="helix" evidence="25">
    <location>
        <begin position="314"/>
        <end position="324"/>
    </location>
</feature>
<feature type="turn" evidence="27">
    <location>
        <begin position="326"/>
        <end position="328"/>
    </location>
</feature>
<feature type="helix" evidence="28">
    <location>
        <begin position="331"/>
        <end position="333"/>
    </location>
</feature>
<feature type="helix" evidence="25">
    <location>
        <begin position="336"/>
        <end position="349"/>
    </location>
</feature>
<feature type="helix" evidence="28">
    <location>
        <begin position="363"/>
        <end position="365"/>
    </location>
</feature>
<feature type="helix" evidence="28">
    <location>
        <begin position="371"/>
        <end position="405"/>
    </location>
</feature>
<feature type="helix" evidence="24">
    <location>
        <begin position="646"/>
        <end position="659"/>
    </location>
</feature>
<feature type="helix" evidence="24">
    <location>
        <begin position="661"/>
        <end position="672"/>
    </location>
</feature>
<feature type="strand" evidence="24">
    <location>
        <begin position="676"/>
        <end position="679"/>
    </location>
</feature>
<feature type="strand" evidence="24">
    <location>
        <begin position="685"/>
        <end position="688"/>
    </location>
</feature>
<feature type="helix" evidence="24">
    <location>
        <begin position="690"/>
        <end position="692"/>
    </location>
</feature>
<feature type="strand" evidence="24">
    <location>
        <begin position="693"/>
        <end position="696"/>
    </location>
</feature>
<feature type="helix" evidence="24">
    <location>
        <begin position="702"/>
        <end position="706"/>
    </location>
</feature>
<feature type="helix" evidence="24">
    <location>
        <begin position="708"/>
        <end position="711"/>
    </location>
</feature>
<feature type="strand" evidence="24">
    <location>
        <begin position="712"/>
        <end position="715"/>
    </location>
</feature>
<feature type="strand" evidence="24">
    <location>
        <begin position="718"/>
        <end position="721"/>
    </location>
</feature>
<feature type="helix" evidence="24">
    <location>
        <begin position="722"/>
        <end position="724"/>
    </location>
</feature>
<feature type="helix" evidence="24">
    <location>
        <begin position="727"/>
        <end position="737"/>
    </location>
</feature>
<sequence length="739" mass="83287">MDSRPQKIWMAPSLTESDMDYHKILTAGLSVQQGIVRQRVIPVYQVNNLEEICQLIIQAFEAGVDFQESADSFLLMLCLHHAYQGDYKLFLESGAVKYLEGHGFRFEVKKRDGVKRLEELLPAVSSGKNIKRTLAAMPEEETTEANAGQFLSFASLFLPKLVVGEKACLEKVQRQIQVHAEQGLIQYPTAWQSVGHMMVIFRLMRTNFLIKFLLIHQGMHMVAGHDANDAVISNSVAQARFSGLLIVKTVLDHILQKTERGVRLHPLARTAKVKNEVNSFKAALSSLAKHGEYAPFARLLNLSGVNNLEHGLFPQLSAIALGVATAHGSTLAGVNVGEQYQQLREAATEAEKQLQQYAESRELDHLGLDDQEKKILMNFHQKKNEISFQQTNAMVTLRKERLAKLTEAITAASLPKTSGHYDDDDDIPFPGPINDDDNPGHQDDDPTDSQDTTIPDVVVDPDDGSYGEYQSYSENGMNAPDDLVLFDLDEDDEDTKPVPNRSTKGGQQKNSQKGQHIEGRQTQSRPIQNVPGPHRTIHHASAPLTDNDRRNEPSGSTSPRMLTPINEEADPLDDADDETSSLPPLESDDEEQDRDGTSNRTPTVAPPAPVYRDHSEKKELPQDEQQDQDHTQEARNQDSDNTQSEHSFEEMYRHILRSQGPFDAVLYYHMMKDEPVVFSTSDGKEYTYPDSLEEEYPPWLTEKEAMNEENRFVTLDGQQFYWPVMNHKNKFMAILQHHQ</sequence>
<evidence type="ECO:0000256" key="1">
    <source>
        <dbReference type="SAM" id="MobiDB-lite"/>
    </source>
</evidence>
<evidence type="ECO:0000269" key="2">
    <source>
    </source>
</evidence>
<evidence type="ECO:0000269" key="3">
    <source>
    </source>
</evidence>
<evidence type="ECO:0000269" key="4">
    <source>
    </source>
</evidence>
<evidence type="ECO:0000269" key="5">
    <source>
    </source>
</evidence>
<evidence type="ECO:0000269" key="6">
    <source>
    </source>
</evidence>
<evidence type="ECO:0000269" key="7">
    <source>
    </source>
</evidence>
<evidence type="ECO:0000269" key="8">
    <source>
    </source>
</evidence>
<evidence type="ECO:0000269" key="9">
    <source>
    </source>
</evidence>
<evidence type="ECO:0000269" key="10">
    <source>
    </source>
</evidence>
<evidence type="ECO:0000269" key="11">
    <source>
    </source>
</evidence>
<evidence type="ECO:0000269" key="12">
    <source>
    </source>
</evidence>
<evidence type="ECO:0000269" key="13">
    <source>
    </source>
</evidence>
<evidence type="ECO:0000269" key="14">
    <source>
    </source>
</evidence>
<evidence type="ECO:0000269" key="15">
    <source>
    </source>
</evidence>
<evidence type="ECO:0000269" key="16">
    <source>
    </source>
</evidence>
<evidence type="ECO:0000269" key="17">
    <source>
    </source>
</evidence>
<evidence type="ECO:0000269" key="18">
    <source>
    </source>
</evidence>
<evidence type="ECO:0000269" key="19">
    <source>
    </source>
</evidence>
<evidence type="ECO:0000269" key="20">
    <source>
    </source>
</evidence>
<evidence type="ECO:0000303" key="21">
    <source>
    </source>
</evidence>
<evidence type="ECO:0000303" key="22">
    <source>
    </source>
</evidence>
<evidence type="ECO:0000305" key="23"/>
<evidence type="ECO:0007829" key="24">
    <source>
        <dbReference type="PDB" id="4QB0"/>
    </source>
</evidence>
<evidence type="ECO:0007829" key="25">
    <source>
        <dbReference type="PDB" id="4Z9P"/>
    </source>
</evidence>
<evidence type="ECO:0007829" key="26">
    <source>
        <dbReference type="PDB" id="4ZTA"/>
    </source>
</evidence>
<evidence type="ECO:0007829" key="27">
    <source>
        <dbReference type="PDB" id="4ZTI"/>
    </source>
</evidence>
<evidence type="ECO:0007829" key="28">
    <source>
        <dbReference type="PDB" id="6NUT"/>
    </source>
</evidence>
<gene>
    <name type="primary">NP</name>
</gene>
<name>NCAP_EBOZM</name>
<dbReference type="EMBL" id="J04337">
    <property type="protein sequence ID" value="AAA42977.1"/>
    <property type="molecule type" value="Genomic_RNA"/>
</dbReference>
<dbReference type="EMBL" id="L11365">
    <property type="protein sequence ID" value="AAB81001.1"/>
    <property type="molecule type" value="Genomic_RNA"/>
</dbReference>
<dbReference type="EMBL" id="AF086833">
    <property type="protein sequence ID" value="AAD14590.1"/>
    <property type="molecule type" value="Genomic_RNA"/>
</dbReference>
<dbReference type="EMBL" id="AF272001">
    <property type="protein sequence ID" value="AAG40164.1"/>
    <property type="molecule type" value="Genomic_RNA"/>
</dbReference>
<dbReference type="EMBL" id="AY142960">
    <property type="protein sequence ID" value="AAN37504.1"/>
    <property type="molecule type" value="Genomic_RNA"/>
</dbReference>
<dbReference type="EMBL" id="AF499101">
    <property type="protein sequence ID" value="AAM76031.1"/>
    <property type="molecule type" value="Genomic_RNA"/>
</dbReference>
<dbReference type="PIR" id="A31471">
    <property type="entry name" value="VHIWEB"/>
</dbReference>
<dbReference type="RefSeq" id="NP_066243.1">
    <property type="nucleotide sequence ID" value="NC_002549.1"/>
</dbReference>
<dbReference type="PDB" id="4QAZ">
    <property type="method" value="X-ray"/>
    <property type="resolution" value="1.98 A"/>
    <property type="chains" value="A=641-739"/>
</dbReference>
<dbReference type="PDB" id="4QB0">
    <property type="method" value="X-ray"/>
    <property type="resolution" value="1.75 A"/>
    <property type="chains" value="A=641-739"/>
</dbReference>
<dbReference type="PDB" id="4YPI">
    <property type="method" value="X-ray"/>
    <property type="resolution" value="3.71 A"/>
    <property type="chains" value="A/B/C/D=38-385"/>
</dbReference>
<dbReference type="PDB" id="4Z9P">
    <property type="method" value="X-ray"/>
    <property type="resolution" value="1.79 A"/>
    <property type="chains" value="A=36-351"/>
</dbReference>
<dbReference type="PDB" id="4ZTA">
    <property type="method" value="X-ray"/>
    <property type="resolution" value="2.40 A"/>
    <property type="chains" value="A=33-367"/>
</dbReference>
<dbReference type="PDB" id="4ZTG">
    <property type="method" value="X-ray"/>
    <property type="resolution" value="2.80 A"/>
    <property type="chains" value="A=33-367"/>
</dbReference>
<dbReference type="PDB" id="4ZTI">
    <property type="method" value="X-ray"/>
    <property type="resolution" value="2.40 A"/>
    <property type="chains" value="A/B=33-367"/>
</dbReference>
<dbReference type="PDB" id="5T3T">
    <property type="method" value="X-ray"/>
    <property type="resolution" value="2.20 A"/>
    <property type="chains" value="A/B/C/D/E/F/G/H/I/J=600-627"/>
</dbReference>
<dbReference type="PDB" id="5Z9W">
    <property type="method" value="EM"/>
    <property type="resolution" value="3.90 A"/>
    <property type="chains" value="A=19-406"/>
</dbReference>
<dbReference type="PDB" id="6C54">
    <property type="method" value="EM"/>
    <property type="resolution" value="5.80 A"/>
    <property type="chains" value="A/B=25-457"/>
</dbReference>
<dbReference type="PDB" id="6EHL">
    <property type="method" value="EM"/>
    <property type="resolution" value="6.60 A"/>
    <property type="chains" value="A=1-739"/>
</dbReference>
<dbReference type="PDB" id="6EHM">
    <property type="method" value="EM"/>
    <property type="resolution" value="7.30 A"/>
    <property type="chains" value="A/B=1-739"/>
</dbReference>
<dbReference type="PDB" id="6NUT">
    <property type="method" value="EM"/>
    <property type="resolution" value="3.10 A"/>
    <property type="chains" value="A=1-450"/>
</dbReference>
<dbReference type="PDB" id="8USN">
    <property type="method" value="EM"/>
    <property type="resolution" value="8.90 A"/>
    <property type="chains" value="A/B/E=1-739"/>
</dbReference>
<dbReference type="PDB" id="8UST">
    <property type="method" value="EM"/>
    <property type="resolution" value="7.30 A"/>
    <property type="chains" value="A/B/E=1-739"/>
</dbReference>
<dbReference type="PDB" id="8Y9J">
    <property type="method" value="EM"/>
    <property type="resolution" value="4.60 A"/>
    <property type="chains" value="A/B=1-739"/>
</dbReference>
<dbReference type="PDBsum" id="4QAZ"/>
<dbReference type="PDBsum" id="4QB0"/>
<dbReference type="PDBsum" id="4YPI"/>
<dbReference type="PDBsum" id="4Z9P"/>
<dbReference type="PDBsum" id="4ZTA"/>
<dbReference type="PDBsum" id="4ZTG"/>
<dbReference type="PDBsum" id="4ZTI"/>
<dbReference type="PDBsum" id="5T3T"/>
<dbReference type="PDBsum" id="5Z9W"/>
<dbReference type="PDBsum" id="6C54"/>
<dbReference type="PDBsum" id="6EHL"/>
<dbReference type="PDBsum" id="6EHM"/>
<dbReference type="PDBsum" id="6NUT"/>
<dbReference type="PDBsum" id="8USN"/>
<dbReference type="PDBsum" id="8UST"/>
<dbReference type="PDBsum" id="8Y9J"/>
<dbReference type="EMDB" id="EMD-0522"/>
<dbReference type="EMDB" id="EMD-3869"/>
<dbReference type="EMDB" id="EMD-3870"/>
<dbReference type="EMDB" id="EMD-3871"/>
<dbReference type="EMDB" id="EMD-3872"/>
<dbReference type="EMDB" id="EMD-3873"/>
<dbReference type="EMDB" id="EMD-39081"/>
<dbReference type="EMDB" id="EMD-42509"/>
<dbReference type="SMR" id="P18272"/>
<dbReference type="ELM" id="P18272"/>
<dbReference type="IntAct" id="P18272">
    <property type="interactions" value="4"/>
</dbReference>
<dbReference type="ABCD" id="P18272">
    <property type="antibodies" value="2 sequenced antibodies"/>
</dbReference>
<dbReference type="GeneID" id="911830"/>
<dbReference type="KEGG" id="vg:911830"/>
<dbReference type="EvolutionaryTrace" id="P18272"/>
<dbReference type="Proteomes" id="UP000007209">
    <property type="component" value="Genome"/>
</dbReference>
<dbReference type="Proteomes" id="UP000109874">
    <property type="component" value="Genome"/>
</dbReference>
<dbReference type="Proteomes" id="UP000149419">
    <property type="component" value="Genome"/>
</dbReference>
<dbReference type="Proteomes" id="UP000150973">
    <property type="component" value="Genome"/>
</dbReference>
<dbReference type="Proteomes" id="UP000180447">
    <property type="component" value="Genome"/>
</dbReference>
<dbReference type="GO" id="GO:0019029">
    <property type="term" value="C:helical viral capsid"/>
    <property type="evidence" value="ECO:0007669"/>
    <property type="project" value="UniProtKB-KW"/>
</dbReference>
<dbReference type="GO" id="GO:0030430">
    <property type="term" value="C:host cell cytoplasm"/>
    <property type="evidence" value="ECO:0007669"/>
    <property type="project" value="UniProtKB-SubCell"/>
</dbReference>
<dbReference type="GO" id="GO:1990904">
    <property type="term" value="C:ribonucleoprotein complex"/>
    <property type="evidence" value="ECO:0007669"/>
    <property type="project" value="UniProtKB-KW"/>
</dbReference>
<dbReference type="GO" id="GO:0019013">
    <property type="term" value="C:viral nucleocapsid"/>
    <property type="evidence" value="ECO:0000314"/>
    <property type="project" value="CACAO"/>
</dbReference>
<dbReference type="GO" id="GO:0003723">
    <property type="term" value="F:RNA binding"/>
    <property type="evidence" value="ECO:0007669"/>
    <property type="project" value="UniProtKB-KW"/>
</dbReference>
<dbReference type="GO" id="GO:0019074">
    <property type="term" value="P:viral RNA genome packaging"/>
    <property type="evidence" value="ECO:0007669"/>
    <property type="project" value="InterPro"/>
</dbReference>
<dbReference type="Gene3D" id="1.20.120.1160">
    <property type="match status" value="1"/>
</dbReference>
<dbReference type="InterPro" id="IPR008609">
    <property type="entry name" value="Ebola_NP"/>
</dbReference>
<dbReference type="Pfam" id="PF05505">
    <property type="entry name" value="Ebola_NP"/>
    <property type="match status" value="1"/>
</dbReference>
<dbReference type="PIRSF" id="PIRSF003900">
    <property type="entry name" value="N_FiloV"/>
    <property type="match status" value="1"/>
</dbReference>
<accession>P18272</accession>
<accession>Q773N6</accession>
<accession>Q8JS64</accession>
<accession>Q9DQD3</accession>
<accession>Q9YMG4</accession>
<proteinExistence type="evidence at protein level"/>
<protein>
    <recommendedName>
        <fullName>Nucleoprotein</fullName>
    </recommendedName>
    <alternativeName>
        <fullName evidence="21">Ebola NP</fullName>
        <shortName evidence="21">eNP</shortName>
    </alternativeName>
    <alternativeName>
        <fullName>Nucleocapsid protein</fullName>
        <shortName>Protein N</shortName>
    </alternativeName>
</protein>
<organism>
    <name type="scientific">Zaire ebolavirus (strain Mayinga-76)</name>
    <name type="common">ZEBOV</name>
    <name type="synonym">Zaire Ebola virus</name>
    <dbReference type="NCBI Taxonomy" id="128952"/>
    <lineage>
        <taxon>Viruses</taxon>
        <taxon>Riboviria</taxon>
        <taxon>Orthornavirae</taxon>
        <taxon>Negarnaviricota</taxon>
        <taxon>Haploviricotina</taxon>
        <taxon>Monjiviricetes</taxon>
        <taxon>Mononegavirales</taxon>
        <taxon>Filoviridae</taxon>
        <taxon>Orthoebolavirus</taxon>
        <taxon>Orthoebolavirus zairense</taxon>
        <taxon>Zaire ebolavirus</taxon>
    </lineage>
</organism>